<keyword id="KW-0021">Allosteric enzyme</keyword>
<keyword id="KW-0067">ATP-binding</keyword>
<keyword id="KW-0119">Carbohydrate metabolism</keyword>
<keyword id="KW-0320">Glycogen biosynthesis</keyword>
<keyword id="KW-0321">Glycogen metabolism</keyword>
<keyword id="KW-0547">Nucleotide-binding</keyword>
<keyword id="KW-0548">Nucleotidyltransferase</keyword>
<keyword id="KW-0808">Transferase</keyword>
<proteinExistence type="inferred from homology"/>
<feature type="chain" id="PRO_1000130498" description="Glucose-1-phosphate adenylyltransferase">
    <location>
        <begin position="1"/>
        <end position="431"/>
    </location>
</feature>
<feature type="binding site" evidence="1">
    <location>
        <position position="39"/>
    </location>
    <ligand>
        <name>beta-D-fructose 1,6-bisphosphate</name>
        <dbReference type="ChEBI" id="CHEBI:32966"/>
    </ligand>
</feature>
<feature type="binding site" evidence="1">
    <location>
        <position position="40"/>
    </location>
    <ligand>
        <name>AMP</name>
        <dbReference type="ChEBI" id="CHEBI:456215"/>
    </ligand>
</feature>
<feature type="binding site" evidence="1">
    <location>
        <position position="46"/>
    </location>
    <ligand>
        <name>AMP</name>
        <dbReference type="ChEBI" id="CHEBI:456215"/>
    </ligand>
</feature>
<feature type="binding site" evidence="1">
    <location>
        <position position="52"/>
    </location>
    <ligand>
        <name>AMP</name>
        <dbReference type="ChEBI" id="CHEBI:456215"/>
    </ligand>
</feature>
<feature type="binding site" evidence="1">
    <location>
        <position position="114"/>
    </location>
    <ligand>
        <name>alpha-D-glucose 1-phosphate</name>
        <dbReference type="ChEBI" id="CHEBI:58601"/>
    </ligand>
</feature>
<feature type="binding site" evidence="1">
    <location>
        <position position="130"/>
    </location>
    <ligand>
        <name>AMP</name>
        <dbReference type="ChEBI" id="CHEBI:456215"/>
    </ligand>
</feature>
<feature type="binding site" evidence="1">
    <location>
        <position position="179"/>
    </location>
    <ligand>
        <name>alpha-D-glucose 1-phosphate</name>
        <dbReference type="ChEBI" id="CHEBI:58601"/>
    </ligand>
</feature>
<feature type="binding site" evidence="1">
    <location>
        <begin position="194"/>
        <end position="195"/>
    </location>
    <ligand>
        <name>alpha-D-glucose 1-phosphate</name>
        <dbReference type="ChEBI" id="CHEBI:58601"/>
    </ligand>
</feature>
<feature type="binding site" evidence="1">
    <location>
        <position position="212"/>
    </location>
    <ligand>
        <name>alpha-D-glucose 1-phosphate</name>
        <dbReference type="ChEBI" id="CHEBI:58601"/>
    </ligand>
</feature>
<feature type="binding site" evidence="1">
    <location>
        <position position="370"/>
    </location>
    <ligand>
        <name>AMP</name>
        <dbReference type="ChEBI" id="CHEBI:456215"/>
    </ligand>
</feature>
<feature type="binding site" evidence="1">
    <location>
        <position position="386"/>
    </location>
    <ligand>
        <name>AMP</name>
        <dbReference type="ChEBI" id="CHEBI:456215"/>
    </ligand>
</feature>
<feature type="binding site" evidence="1">
    <location>
        <begin position="419"/>
        <end position="423"/>
    </location>
    <ligand>
        <name>beta-D-fructose 1,6-bisphosphate</name>
        <dbReference type="ChEBI" id="CHEBI:32966"/>
    </ligand>
</feature>
<feature type="binding site" evidence="1">
    <location>
        <begin position="429"/>
        <end position="431"/>
    </location>
    <ligand>
        <name>beta-D-fructose 1,6-bisphosphate</name>
        <dbReference type="ChEBI" id="CHEBI:32966"/>
    </ligand>
</feature>
<feature type="site" description="Could play a key role in the communication between the regulatory and the substrate sites" evidence="1">
    <location>
        <position position="74"/>
    </location>
</feature>
<feature type="site" description="Could play a key role in the communication between the regulatory and the substrate sites" evidence="1">
    <location>
        <position position="113"/>
    </location>
</feature>
<dbReference type="EC" id="2.7.7.27" evidence="1"/>
<dbReference type="EMBL" id="CP001144">
    <property type="protein sequence ID" value="ACH77346.1"/>
    <property type="molecule type" value="Genomic_DNA"/>
</dbReference>
<dbReference type="RefSeq" id="WP_000253991.1">
    <property type="nucleotide sequence ID" value="NC_011205.1"/>
</dbReference>
<dbReference type="SMR" id="B5FKF5"/>
<dbReference type="KEGG" id="sed:SeD_A3906"/>
<dbReference type="HOGENOM" id="CLU_029499_14_1_6"/>
<dbReference type="UniPathway" id="UPA00164"/>
<dbReference type="Proteomes" id="UP000008322">
    <property type="component" value="Chromosome"/>
</dbReference>
<dbReference type="GO" id="GO:0005524">
    <property type="term" value="F:ATP binding"/>
    <property type="evidence" value="ECO:0007669"/>
    <property type="project" value="UniProtKB-KW"/>
</dbReference>
<dbReference type="GO" id="GO:0008878">
    <property type="term" value="F:glucose-1-phosphate adenylyltransferase activity"/>
    <property type="evidence" value="ECO:0007669"/>
    <property type="project" value="UniProtKB-UniRule"/>
</dbReference>
<dbReference type="GO" id="GO:0005978">
    <property type="term" value="P:glycogen biosynthetic process"/>
    <property type="evidence" value="ECO:0007669"/>
    <property type="project" value="UniProtKB-UniRule"/>
</dbReference>
<dbReference type="CDD" id="cd02508">
    <property type="entry name" value="ADP_Glucose_PP"/>
    <property type="match status" value="1"/>
</dbReference>
<dbReference type="CDD" id="cd04651">
    <property type="entry name" value="LbH_G1P_AT_C"/>
    <property type="match status" value="1"/>
</dbReference>
<dbReference type="FunFam" id="2.160.10.10:FF:000006">
    <property type="entry name" value="Glucose-1-phosphate adenylyltransferase"/>
    <property type="match status" value="1"/>
</dbReference>
<dbReference type="FunFam" id="3.90.550.10:FF:000014">
    <property type="entry name" value="Glucose-1-phosphate adenylyltransferase"/>
    <property type="match status" value="1"/>
</dbReference>
<dbReference type="Gene3D" id="2.160.10.10">
    <property type="entry name" value="Hexapeptide repeat proteins"/>
    <property type="match status" value="1"/>
</dbReference>
<dbReference type="Gene3D" id="3.90.550.10">
    <property type="entry name" value="Spore Coat Polysaccharide Biosynthesis Protein SpsA, Chain A"/>
    <property type="match status" value="1"/>
</dbReference>
<dbReference type="HAMAP" id="MF_00624">
    <property type="entry name" value="GlgC"/>
    <property type="match status" value="1"/>
</dbReference>
<dbReference type="InterPro" id="IPR011831">
    <property type="entry name" value="ADP-Glc_PPase"/>
</dbReference>
<dbReference type="InterPro" id="IPR005836">
    <property type="entry name" value="ADP_Glu_pyroP_CS"/>
</dbReference>
<dbReference type="InterPro" id="IPR023049">
    <property type="entry name" value="GlgC_bac"/>
</dbReference>
<dbReference type="InterPro" id="IPR056818">
    <property type="entry name" value="GlmU/GlgC-like_hexapep"/>
</dbReference>
<dbReference type="InterPro" id="IPR005835">
    <property type="entry name" value="NTP_transferase_dom"/>
</dbReference>
<dbReference type="InterPro" id="IPR029044">
    <property type="entry name" value="Nucleotide-diphossugar_trans"/>
</dbReference>
<dbReference type="InterPro" id="IPR011004">
    <property type="entry name" value="Trimer_LpxA-like_sf"/>
</dbReference>
<dbReference type="NCBIfam" id="TIGR02091">
    <property type="entry name" value="glgC"/>
    <property type="match status" value="1"/>
</dbReference>
<dbReference type="NCBIfam" id="NF001947">
    <property type="entry name" value="PRK00725.1"/>
    <property type="match status" value="1"/>
</dbReference>
<dbReference type="NCBIfam" id="NF002023">
    <property type="entry name" value="PRK00844.1"/>
    <property type="match status" value="1"/>
</dbReference>
<dbReference type="PANTHER" id="PTHR43523:SF2">
    <property type="entry name" value="GLUCOSE-1-PHOSPHATE ADENYLYLTRANSFERASE"/>
    <property type="match status" value="1"/>
</dbReference>
<dbReference type="PANTHER" id="PTHR43523">
    <property type="entry name" value="GLUCOSE-1-PHOSPHATE ADENYLYLTRANSFERASE-RELATED"/>
    <property type="match status" value="1"/>
</dbReference>
<dbReference type="Pfam" id="PF24894">
    <property type="entry name" value="Hexapep_GlmU"/>
    <property type="match status" value="1"/>
</dbReference>
<dbReference type="Pfam" id="PF00483">
    <property type="entry name" value="NTP_transferase"/>
    <property type="match status" value="1"/>
</dbReference>
<dbReference type="SUPFAM" id="SSF53448">
    <property type="entry name" value="Nucleotide-diphospho-sugar transferases"/>
    <property type="match status" value="1"/>
</dbReference>
<dbReference type="SUPFAM" id="SSF51161">
    <property type="entry name" value="Trimeric LpxA-like enzymes"/>
    <property type="match status" value="1"/>
</dbReference>
<dbReference type="PROSITE" id="PS00808">
    <property type="entry name" value="ADP_GLC_PYROPHOSPH_1"/>
    <property type="match status" value="1"/>
</dbReference>
<dbReference type="PROSITE" id="PS00809">
    <property type="entry name" value="ADP_GLC_PYROPHOSPH_2"/>
    <property type="match status" value="1"/>
</dbReference>
<dbReference type="PROSITE" id="PS00810">
    <property type="entry name" value="ADP_GLC_PYROPHOSPH_3"/>
    <property type="match status" value="1"/>
</dbReference>
<sequence>MVSLEKNDRVMLARQLPLESVALILAGGRGTRLKDLTNKRAKPAVHFGGKFRIIDFALSNCLNSGIRRIGVITQYQSHTLVQHIQRGWSLFSEEMNEFVDLLPAQQRMKGENWYRGTADAVTQNLDIIRRYKAEYVVILAGDHIYKQDYSRMLIDHVEKGARCTVVCMPVPIKEATAFGVMAVDESDKIIDFVEKPANPPAMPGDASKSLASMGIYVFDADYLYELLAADDKDDASSHDFGKDIIPKITREGMAYAHPFPLSCVQSDPQAEPYWRDVGTLEAYWKANLDLASVTPELDMYDQNWPIRTHMESLPPAKFVQDRSGSHGMTLNSLVSGGCIISGSVVVQSVLFPRVRINSFCNIDSAVLLPEVWVGRSCRLRRCVIDRACIIPEGMVIGENAEEDARRFYRSEEGIVLVTREMLRKLQVKQER</sequence>
<accession>B5FKF5</accession>
<name>GLGC_SALDC</name>
<comment type="function">
    <text evidence="1">Involved in the biosynthesis of ADP-glucose, a building block required for the elongation reactions to produce glycogen. Catalyzes the reaction between ATP and alpha-D-glucose 1-phosphate (G1P) to produce pyrophosphate and ADP-Glc.</text>
</comment>
<comment type="catalytic activity">
    <reaction evidence="1">
        <text>alpha-D-glucose 1-phosphate + ATP + H(+) = ADP-alpha-D-glucose + diphosphate</text>
        <dbReference type="Rhea" id="RHEA:12120"/>
        <dbReference type="ChEBI" id="CHEBI:15378"/>
        <dbReference type="ChEBI" id="CHEBI:30616"/>
        <dbReference type="ChEBI" id="CHEBI:33019"/>
        <dbReference type="ChEBI" id="CHEBI:57498"/>
        <dbReference type="ChEBI" id="CHEBI:58601"/>
        <dbReference type="EC" id="2.7.7.27"/>
    </reaction>
</comment>
<comment type="activity regulation">
    <text evidence="1">Allosterically activated by fructose-1,6-bisphosphate (F16BP) and inhibited by AMP.</text>
</comment>
<comment type="pathway">
    <text evidence="1">Glycan biosynthesis; glycogen biosynthesis.</text>
</comment>
<comment type="subunit">
    <text evidence="1">Homotetramer.</text>
</comment>
<comment type="similarity">
    <text evidence="1">Belongs to the bacterial/plant glucose-1-phosphate adenylyltransferase family.</text>
</comment>
<organism>
    <name type="scientific">Salmonella dublin (strain CT_02021853)</name>
    <dbReference type="NCBI Taxonomy" id="439851"/>
    <lineage>
        <taxon>Bacteria</taxon>
        <taxon>Pseudomonadati</taxon>
        <taxon>Pseudomonadota</taxon>
        <taxon>Gammaproteobacteria</taxon>
        <taxon>Enterobacterales</taxon>
        <taxon>Enterobacteriaceae</taxon>
        <taxon>Salmonella</taxon>
    </lineage>
</organism>
<reference key="1">
    <citation type="journal article" date="2011" name="J. Bacteriol.">
        <title>Comparative genomics of 28 Salmonella enterica isolates: evidence for CRISPR-mediated adaptive sublineage evolution.</title>
        <authorList>
            <person name="Fricke W.F."/>
            <person name="Mammel M.K."/>
            <person name="McDermott P.F."/>
            <person name="Tartera C."/>
            <person name="White D.G."/>
            <person name="Leclerc J.E."/>
            <person name="Ravel J."/>
            <person name="Cebula T.A."/>
        </authorList>
    </citation>
    <scope>NUCLEOTIDE SEQUENCE [LARGE SCALE GENOMIC DNA]</scope>
    <source>
        <strain>CT_02021853</strain>
    </source>
</reference>
<evidence type="ECO:0000255" key="1">
    <source>
        <dbReference type="HAMAP-Rule" id="MF_00624"/>
    </source>
</evidence>
<protein>
    <recommendedName>
        <fullName evidence="1">Glucose-1-phosphate adenylyltransferase</fullName>
        <ecNumber evidence="1">2.7.7.27</ecNumber>
    </recommendedName>
    <alternativeName>
        <fullName evidence="1">ADP-glucose pyrophosphorylase</fullName>
        <shortName evidence="1">ADPGlc PPase</shortName>
    </alternativeName>
    <alternativeName>
        <fullName evidence="1">ADP-glucose synthase</fullName>
    </alternativeName>
</protein>
<gene>
    <name evidence="1" type="primary">glgC</name>
    <name type="ordered locus">SeD_A3906</name>
</gene>